<sequence>MLPVVALIGRTNVGKSTLFNYLTRTRDALVADFPGLTRDRQYGRVQRGERDYFVVDTGGIIEAAEGIDDQAMKQVDHVLDEADVILFLVDVHAGMTAGDELIADRLRRINKPVLLVANKIDGTQALIAGAEFHAFGLGEPLLISAAHGTGVHALLERVEALLPESGETGETEAEGGIRIAVVGRPNVGKSTLVNRILGEERVVVYDQPGTTRDSIYIPFERRGERYTLIDTAGIRRRARVNEGVEKFSVIKSFQAIEKAHVVIYLVDASEGLTDQDANLLGMVLEIGRGLLIGFNKWDGLEPEQREKVKRQIDVKLPFLEFAKKYFISALHGTGVGVLMDAVKPIYQSAMLDLSASRLTQVLQDCLTAHPPPLVRGRRIKLKYAHQGGHNPPVVVIHGNQTEDLPAAYRRYLGNEFRNAFKLQGVPLKLVFKSAENPFQGRRNELTERQIRKRRRMIRHVKKR</sequence>
<evidence type="ECO:0000255" key="1">
    <source>
        <dbReference type="HAMAP-Rule" id="MF_00195"/>
    </source>
</evidence>
<comment type="function">
    <text evidence="1">GTPase that plays an essential role in the late steps of ribosome biogenesis.</text>
</comment>
<comment type="subunit">
    <text evidence="1">Associates with the 50S ribosomal subunit.</text>
</comment>
<comment type="similarity">
    <text evidence="1">Belongs to the TRAFAC class TrmE-Era-EngA-EngB-Septin-like GTPase superfamily. EngA (Der) GTPase family.</text>
</comment>
<keyword id="KW-0342">GTP-binding</keyword>
<keyword id="KW-0547">Nucleotide-binding</keyword>
<keyword id="KW-1185">Reference proteome</keyword>
<keyword id="KW-0677">Repeat</keyword>
<keyword id="KW-0690">Ribosome biogenesis</keyword>
<reference key="1">
    <citation type="journal article" date="2004" name="PLoS Biol.">
        <title>Genomic insights into methanotrophy: the complete genome sequence of Methylococcus capsulatus (Bath).</title>
        <authorList>
            <person name="Ward N.L."/>
            <person name="Larsen O."/>
            <person name="Sakwa J."/>
            <person name="Bruseth L."/>
            <person name="Khouri H.M."/>
            <person name="Durkin A.S."/>
            <person name="Dimitrov G."/>
            <person name="Jiang L."/>
            <person name="Scanlan D."/>
            <person name="Kang K.H."/>
            <person name="Lewis M.R."/>
            <person name="Nelson K.E."/>
            <person name="Methe B.A."/>
            <person name="Wu M."/>
            <person name="Heidelberg J.F."/>
            <person name="Paulsen I.T."/>
            <person name="Fouts D.E."/>
            <person name="Ravel J."/>
            <person name="Tettelin H."/>
            <person name="Ren Q."/>
            <person name="Read T.D."/>
            <person name="DeBoy R.T."/>
            <person name="Seshadri R."/>
            <person name="Salzberg S.L."/>
            <person name="Jensen H.B."/>
            <person name="Birkeland N.K."/>
            <person name="Nelson W.C."/>
            <person name="Dodson R.J."/>
            <person name="Grindhaug S.H."/>
            <person name="Holt I.E."/>
            <person name="Eidhammer I."/>
            <person name="Jonasen I."/>
            <person name="Vanaken S."/>
            <person name="Utterback T.R."/>
            <person name="Feldblyum T.V."/>
            <person name="Fraser C.M."/>
            <person name="Lillehaug J.R."/>
            <person name="Eisen J.A."/>
        </authorList>
    </citation>
    <scope>NUCLEOTIDE SEQUENCE [LARGE SCALE GENOMIC DNA]</scope>
    <source>
        <strain>ATCC 33009 / NCIMB 11132 / Bath</strain>
    </source>
</reference>
<dbReference type="EMBL" id="AE017282">
    <property type="protein sequence ID" value="AAU91040.1"/>
    <property type="molecule type" value="Genomic_DNA"/>
</dbReference>
<dbReference type="RefSeq" id="WP_010962087.1">
    <property type="nucleotide sequence ID" value="NC_002977.6"/>
</dbReference>
<dbReference type="SMR" id="Q603B5"/>
<dbReference type="STRING" id="243233.MCA2892"/>
<dbReference type="GeneID" id="88225065"/>
<dbReference type="KEGG" id="mca:MCA2892"/>
<dbReference type="eggNOG" id="COG1160">
    <property type="taxonomic scope" value="Bacteria"/>
</dbReference>
<dbReference type="HOGENOM" id="CLU_016077_6_2_6"/>
<dbReference type="Proteomes" id="UP000006821">
    <property type="component" value="Chromosome"/>
</dbReference>
<dbReference type="GO" id="GO:0005525">
    <property type="term" value="F:GTP binding"/>
    <property type="evidence" value="ECO:0007669"/>
    <property type="project" value="UniProtKB-UniRule"/>
</dbReference>
<dbReference type="GO" id="GO:0043022">
    <property type="term" value="F:ribosome binding"/>
    <property type="evidence" value="ECO:0007669"/>
    <property type="project" value="TreeGrafter"/>
</dbReference>
<dbReference type="GO" id="GO:0042254">
    <property type="term" value="P:ribosome biogenesis"/>
    <property type="evidence" value="ECO:0007669"/>
    <property type="project" value="UniProtKB-KW"/>
</dbReference>
<dbReference type="CDD" id="cd01894">
    <property type="entry name" value="EngA1"/>
    <property type="match status" value="1"/>
</dbReference>
<dbReference type="CDD" id="cd01895">
    <property type="entry name" value="EngA2"/>
    <property type="match status" value="1"/>
</dbReference>
<dbReference type="FunFam" id="3.30.300.20:FF:000004">
    <property type="entry name" value="GTPase Der"/>
    <property type="match status" value="1"/>
</dbReference>
<dbReference type="FunFam" id="3.40.50.300:FF:000040">
    <property type="entry name" value="GTPase Der"/>
    <property type="match status" value="1"/>
</dbReference>
<dbReference type="FunFam" id="3.40.50.300:FF:000057">
    <property type="entry name" value="GTPase Der"/>
    <property type="match status" value="1"/>
</dbReference>
<dbReference type="Gene3D" id="3.30.300.20">
    <property type="match status" value="1"/>
</dbReference>
<dbReference type="Gene3D" id="3.40.50.300">
    <property type="entry name" value="P-loop containing nucleotide triphosphate hydrolases"/>
    <property type="match status" value="2"/>
</dbReference>
<dbReference type="HAMAP" id="MF_00195">
    <property type="entry name" value="GTPase_Der"/>
    <property type="match status" value="1"/>
</dbReference>
<dbReference type="InterPro" id="IPR031166">
    <property type="entry name" value="G_ENGA"/>
</dbReference>
<dbReference type="InterPro" id="IPR006073">
    <property type="entry name" value="GTP-bd"/>
</dbReference>
<dbReference type="InterPro" id="IPR016484">
    <property type="entry name" value="GTPase_Der"/>
</dbReference>
<dbReference type="InterPro" id="IPR032859">
    <property type="entry name" value="KH_dom-like"/>
</dbReference>
<dbReference type="InterPro" id="IPR015946">
    <property type="entry name" value="KH_dom-like_a/b"/>
</dbReference>
<dbReference type="InterPro" id="IPR027417">
    <property type="entry name" value="P-loop_NTPase"/>
</dbReference>
<dbReference type="InterPro" id="IPR005225">
    <property type="entry name" value="Small_GTP-bd"/>
</dbReference>
<dbReference type="NCBIfam" id="TIGR03594">
    <property type="entry name" value="GTPase_EngA"/>
    <property type="match status" value="1"/>
</dbReference>
<dbReference type="NCBIfam" id="TIGR00231">
    <property type="entry name" value="small_GTP"/>
    <property type="match status" value="2"/>
</dbReference>
<dbReference type="PANTHER" id="PTHR43834">
    <property type="entry name" value="GTPASE DER"/>
    <property type="match status" value="1"/>
</dbReference>
<dbReference type="PANTHER" id="PTHR43834:SF6">
    <property type="entry name" value="GTPASE DER"/>
    <property type="match status" value="1"/>
</dbReference>
<dbReference type="Pfam" id="PF14714">
    <property type="entry name" value="KH_dom-like"/>
    <property type="match status" value="1"/>
</dbReference>
<dbReference type="Pfam" id="PF01926">
    <property type="entry name" value="MMR_HSR1"/>
    <property type="match status" value="2"/>
</dbReference>
<dbReference type="PIRSF" id="PIRSF006485">
    <property type="entry name" value="GTP-binding_EngA"/>
    <property type="match status" value="1"/>
</dbReference>
<dbReference type="PRINTS" id="PR00326">
    <property type="entry name" value="GTP1OBG"/>
</dbReference>
<dbReference type="SUPFAM" id="SSF52540">
    <property type="entry name" value="P-loop containing nucleoside triphosphate hydrolases"/>
    <property type="match status" value="2"/>
</dbReference>
<dbReference type="PROSITE" id="PS51712">
    <property type="entry name" value="G_ENGA"/>
    <property type="match status" value="2"/>
</dbReference>
<proteinExistence type="inferred from homology"/>
<organism>
    <name type="scientific">Methylococcus capsulatus (strain ATCC 33009 / NCIMB 11132 / Bath)</name>
    <dbReference type="NCBI Taxonomy" id="243233"/>
    <lineage>
        <taxon>Bacteria</taxon>
        <taxon>Pseudomonadati</taxon>
        <taxon>Pseudomonadota</taxon>
        <taxon>Gammaproteobacteria</taxon>
        <taxon>Methylococcales</taxon>
        <taxon>Methylococcaceae</taxon>
        <taxon>Methylococcus</taxon>
    </lineage>
</organism>
<protein>
    <recommendedName>
        <fullName evidence="1">GTPase Der</fullName>
    </recommendedName>
    <alternativeName>
        <fullName evidence="1">GTP-binding protein EngA</fullName>
    </alternativeName>
</protein>
<feature type="chain" id="PRO_1000011664" description="GTPase Der">
    <location>
        <begin position="1"/>
        <end position="463"/>
    </location>
</feature>
<feature type="domain" description="EngA-type G 1">
    <location>
        <begin position="3"/>
        <end position="166"/>
    </location>
</feature>
<feature type="domain" description="EngA-type G 2">
    <location>
        <begin position="177"/>
        <end position="350"/>
    </location>
</feature>
<feature type="domain" description="KH-like" evidence="1">
    <location>
        <begin position="351"/>
        <end position="435"/>
    </location>
</feature>
<feature type="binding site" evidence="1">
    <location>
        <begin position="9"/>
        <end position="16"/>
    </location>
    <ligand>
        <name>GTP</name>
        <dbReference type="ChEBI" id="CHEBI:37565"/>
        <label>1</label>
    </ligand>
</feature>
<feature type="binding site" evidence="1">
    <location>
        <begin position="56"/>
        <end position="60"/>
    </location>
    <ligand>
        <name>GTP</name>
        <dbReference type="ChEBI" id="CHEBI:37565"/>
        <label>1</label>
    </ligand>
</feature>
<feature type="binding site" evidence="1">
    <location>
        <begin position="118"/>
        <end position="121"/>
    </location>
    <ligand>
        <name>GTP</name>
        <dbReference type="ChEBI" id="CHEBI:37565"/>
        <label>1</label>
    </ligand>
</feature>
<feature type="binding site" evidence="1">
    <location>
        <begin position="183"/>
        <end position="190"/>
    </location>
    <ligand>
        <name>GTP</name>
        <dbReference type="ChEBI" id="CHEBI:37565"/>
        <label>2</label>
    </ligand>
</feature>
<feature type="binding site" evidence="1">
    <location>
        <begin position="230"/>
        <end position="234"/>
    </location>
    <ligand>
        <name>GTP</name>
        <dbReference type="ChEBI" id="CHEBI:37565"/>
        <label>2</label>
    </ligand>
</feature>
<feature type="binding site" evidence="1">
    <location>
        <begin position="295"/>
        <end position="298"/>
    </location>
    <ligand>
        <name>GTP</name>
        <dbReference type="ChEBI" id="CHEBI:37565"/>
        <label>2</label>
    </ligand>
</feature>
<accession>Q603B5</accession>
<name>DER_METCA</name>
<gene>
    <name evidence="1" type="primary">der</name>
    <name type="synonym">engA</name>
    <name type="ordered locus">MCA2892</name>
</gene>